<accession>Q85DF2</accession>
<accession>Q85DF0</accession>
<accession>Q85DF1</accession>
<dbReference type="EMBL" id="AB076818">
    <property type="protein sequence ID" value="BAC75903.1"/>
    <property type="molecule type" value="Genomic_DNA"/>
</dbReference>
<dbReference type="EMBL" id="AB076819">
    <property type="protein sequence ID" value="BAC75904.1"/>
    <property type="molecule type" value="Genomic_DNA"/>
</dbReference>
<dbReference type="EMBL" id="AB076820">
    <property type="protein sequence ID" value="BAC75905.1"/>
    <property type="molecule type" value="Genomic_DNA"/>
</dbReference>
<dbReference type="SMR" id="Q85DF2"/>
<dbReference type="GO" id="GO:0005743">
    <property type="term" value="C:mitochondrial inner membrane"/>
    <property type="evidence" value="ECO:0007669"/>
    <property type="project" value="UniProtKB-SubCell"/>
</dbReference>
<dbReference type="GO" id="GO:0045275">
    <property type="term" value="C:respiratory chain complex III"/>
    <property type="evidence" value="ECO:0007669"/>
    <property type="project" value="InterPro"/>
</dbReference>
<dbReference type="GO" id="GO:0046872">
    <property type="term" value="F:metal ion binding"/>
    <property type="evidence" value="ECO:0007669"/>
    <property type="project" value="UniProtKB-KW"/>
</dbReference>
<dbReference type="GO" id="GO:0008121">
    <property type="term" value="F:ubiquinol-cytochrome-c reductase activity"/>
    <property type="evidence" value="ECO:0007669"/>
    <property type="project" value="InterPro"/>
</dbReference>
<dbReference type="GO" id="GO:0006122">
    <property type="term" value="P:mitochondrial electron transport, ubiquinol to cytochrome c"/>
    <property type="evidence" value="ECO:0007669"/>
    <property type="project" value="TreeGrafter"/>
</dbReference>
<dbReference type="CDD" id="cd00290">
    <property type="entry name" value="cytochrome_b_C"/>
    <property type="match status" value="1"/>
</dbReference>
<dbReference type="CDD" id="cd00284">
    <property type="entry name" value="Cytochrome_b_N"/>
    <property type="match status" value="1"/>
</dbReference>
<dbReference type="FunFam" id="1.20.810.10:FF:000002">
    <property type="entry name" value="Cytochrome b"/>
    <property type="match status" value="1"/>
</dbReference>
<dbReference type="Gene3D" id="1.20.810.10">
    <property type="entry name" value="Cytochrome Bc1 Complex, Chain C"/>
    <property type="match status" value="1"/>
</dbReference>
<dbReference type="InterPro" id="IPR005798">
    <property type="entry name" value="Cyt_b/b6_C"/>
</dbReference>
<dbReference type="InterPro" id="IPR036150">
    <property type="entry name" value="Cyt_b/b6_C_sf"/>
</dbReference>
<dbReference type="InterPro" id="IPR005797">
    <property type="entry name" value="Cyt_b/b6_N"/>
</dbReference>
<dbReference type="InterPro" id="IPR027387">
    <property type="entry name" value="Cytb/b6-like_sf"/>
</dbReference>
<dbReference type="InterPro" id="IPR030689">
    <property type="entry name" value="Cytochrome_b"/>
</dbReference>
<dbReference type="InterPro" id="IPR048260">
    <property type="entry name" value="Cytochrome_b_C_euk/bac"/>
</dbReference>
<dbReference type="InterPro" id="IPR048259">
    <property type="entry name" value="Cytochrome_b_N_euk/bac"/>
</dbReference>
<dbReference type="InterPro" id="IPR016174">
    <property type="entry name" value="Di-haem_cyt_TM"/>
</dbReference>
<dbReference type="PANTHER" id="PTHR19271">
    <property type="entry name" value="CYTOCHROME B"/>
    <property type="match status" value="1"/>
</dbReference>
<dbReference type="PANTHER" id="PTHR19271:SF16">
    <property type="entry name" value="CYTOCHROME B"/>
    <property type="match status" value="1"/>
</dbReference>
<dbReference type="Pfam" id="PF00032">
    <property type="entry name" value="Cytochrom_B_C"/>
    <property type="match status" value="1"/>
</dbReference>
<dbReference type="Pfam" id="PF00033">
    <property type="entry name" value="Cytochrome_B"/>
    <property type="match status" value="1"/>
</dbReference>
<dbReference type="PIRSF" id="PIRSF038885">
    <property type="entry name" value="COB"/>
    <property type="match status" value="1"/>
</dbReference>
<dbReference type="SUPFAM" id="SSF81648">
    <property type="entry name" value="a domain/subunit of cytochrome bc1 complex (Ubiquinol-cytochrome c reductase)"/>
    <property type="match status" value="1"/>
</dbReference>
<dbReference type="SUPFAM" id="SSF81342">
    <property type="entry name" value="Transmembrane di-heme cytochromes"/>
    <property type="match status" value="1"/>
</dbReference>
<dbReference type="PROSITE" id="PS51003">
    <property type="entry name" value="CYTB_CTER"/>
    <property type="match status" value="1"/>
</dbReference>
<dbReference type="PROSITE" id="PS51002">
    <property type="entry name" value="CYTB_NTER"/>
    <property type="match status" value="1"/>
</dbReference>
<geneLocation type="mitochondrion"/>
<organism>
    <name type="scientific">Scapanus townsendii</name>
    <name type="common">Townsend's mole</name>
    <name type="synonym">Scalops townsendii</name>
    <dbReference type="NCBI Taxonomy" id="182675"/>
    <lineage>
        <taxon>Eukaryota</taxon>
        <taxon>Metazoa</taxon>
        <taxon>Chordata</taxon>
        <taxon>Craniata</taxon>
        <taxon>Vertebrata</taxon>
        <taxon>Euteleostomi</taxon>
        <taxon>Mammalia</taxon>
        <taxon>Eutheria</taxon>
        <taxon>Laurasiatheria</taxon>
        <taxon>Eulipotyphla</taxon>
        <taxon>Talpidae</taxon>
        <taxon>Scapanus</taxon>
    </lineage>
</organism>
<name>CYB_SCATO</name>
<protein>
    <recommendedName>
        <fullName>Cytochrome b</fullName>
    </recommendedName>
    <alternativeName>
        <fullName>Complex III subunit 3</fullName>
    </alternativeName>
    <alternativeName>
        <fullName>Complex III subunit III</fullName>
    </alternativeName>
    <alternativeName>
        <fullName>Cytochrome b-c1 complex subunit 3</fullName>
    </alternativeName>
    <alternativeName>
        <fullName>Ubiquinol-cytochrome-c reductase complex cytochrome b subunit</fullName>
    </alternativeName>
</protein>
<reference key="1">
    <citation type="journal article" date="2003" name="Mol. Phylogenet. Evol.">
        <title>Molecular phylogenetic relationships of moles, shrew moles, and desmans from the new and old worlds.</title>
        <authorList>
            <person name="Shinohara A."/>
            <person name="Campbell K.L."/>
            <person name="Suzuki H."/>
        </authorList>
    </citation>
    <scope>NUCLEOTIDE SEQUENCE [GENOMIC DNA]</scope>
    <source>
        <strain>Isolate TM-1</strain>
        <strain>Isolate TM-2</strain>
        <strain>Isolate TM-3</strain>
    </source>
</reference>
<proteinExistence type="inferred from homology"/>
<gene>
    <name type="primary">MT-CYB</name>
    <name type="synonym">COB</name>
    <name type="synonym">CYTB</name>
    <name type="synonym">MTCYB</name>
</gene>
<comment type="function">
    <text evidence="2">Component of the ubiquinol-cytochrome c reductase complex (complex III or cytochrome b-c1 complex) that is part of the mitochondrial respiratory chain. The b-c1 complex mediates electron transfer from ubiquinol to cytochrome c. Contributes to the generation of a proton gradient across the mitochondrial membrane that is then used for ATP synthesis.</text>
</comment>
<comment type="cofactor">
    <cofactor evidence="2">
        <name>heme b</name>
        <dbReference type="ChEBI" id="CHEBI:60344"/>
    </cofactor>
    <text evidence="2">Binds 2 heme b groups non-covalently.</text>
</comment>
<comment type="subunit">
    <text evidence="2">The cytochrome bc1 complex contains 11 subunits: 3 respiratory subunits (MT-CYB, CYC1 and UQCRFS1), 2 core proteins (UQCRC1 and UQCRC2) and 6 low-molecular weight proteins (UQCRH/QCR6, UQCRB/QCR7, UQCRQ/QCR8, UQCR10/QCR9, UQCR11/QCR10 and a cleavage product of UQCRFS1). This cytochrome bc1 complex then forms a dimer.</text>
</comment>
<comment type="subcellular location">
    <subcellularLocation>
        <location evidence="2">Mitochondrion inner membrane</location>
        <topology evidence="2">Multi-pass membrane protein</topology>
    </subcellularLocation>
</comment>
<comment type="miscellaneous">
    <text evidence="1">Heme 1 (or BL or b562) is low-potential and absorbs at about 562 nm, and heme 2 (or BH or b566) is high-potential and absorbs at about 566 nm.</text>
</comment>
<comment type="similarity">
    <text evidence="3 4">Belongs to the cytochrome b family.</text>
</comment>
<comment type="caution">
    <text evidence="2">The full-length protein contains only eight transmembrane helices, not nine as predicted by bioinformatics tools.</text>
</comment>
<keyword id="KW-0249">Electron transport</keyword>
<keyword id="KW-0349">Heme</keyword>
<keyword id="KW-0408">Iron</keyword>
<keyword id="KW-0472">Membrane</keyword>
<keyword id="KW-0479">Metal-binding</keyword>
<keyword id="KW-0496">Mitochondrion</keyword>
<keyword id="KW-0999">Mitochondrion inner membrane</keyword>
<keyword id="KW-0679">Respiratory chain</keyword>
<keyword id="KW-0812">Transmembrane</keyword>
<keyword id="KW-1133">Transmembrane helix</keyword>
<keyword id="KW-0813">Transport</keyword>
<keyword id="KW-0830">Ubiquinone</keyword>
<feature type="chain" id="PRO_0000061527" description="Cytochrome b">
    <location>
        <begin position="1"/>
        <end position="379"/>
    </location>
</feature>
<feature type="transmembrane region" description="Helical" evidence="2">
    <location>
        <begin position="33"/>
        <end position="53"/>
    </location>
</feature>
<feature type="transmembrane region" description="Helical" evidence="2">
    <location>
        <begin position="77"/>
        <end position="98"/>
    </location>
</feature>
<feature type="transmembrane region" description="Helical" evidence="2">
    <location>
        <begin position="113"/>
        <end position="133"/>
    </location>
</feature>
<feature type="transmembrane region" description="Helical" evidence="2">
    <location>
        <begin position="178"/>
        <end position="198"/>
    </location>
</feature>
<feature type="transmembrane region" description="Helical" evidence="2">
    <location>
        <begin position="226"/>
        <end position="246"/>
    </location>
</feature>
<feature type="transmembrane region" description="Helical" evidence="2">
    <location>
        <begin position="288"/>
        <end position="308"/>
    </location>
</feature>
<feature type="transmembrane region" description="Helical" evidence="2">
    <location>
        <begin position="320"/>
        <end position="340"/>
    </location>
</feature>
<feature type="transmembrane region" description="Helical" evidence="2">
    <location>
        <begin position="347"/>
        <end position="367"/>
    </location>
</feature>
<feature type="binding site" description="axial binding residue" evidence="2">
    <location>
        <position position="83"/>
    </location>
    <ligand>
        <name>heme b</name>
        <dbReference type="ChEBI" id="CHEBI:60344"/>
        <label>b562</label>
    </ligand>
    <ligandPart>
        <name>Fe</name>
        <dbReference type="ChEBI" id="CHEBI:18248"/>
    </ligandPart>
</feature>
<feature type="binding site" description="axial binding residue" evidence="2">
    <location>
        <position position="97"/>
    </location>
    <ligand>
        <name>heme b</name>
        <dbReference type="ChEBI" id="CHEBI:60344"/>
        <label>b566</label>
    </ligand>
    <ligandPart>
        <name>Fe</name>
        <dbReference type="ChEBI" id="CHEBI:18248"/>
    </ligandPart>
</feature>
<feature type="binding site" description="axial binding residue" evidence="2">
    <location>
        <position position="182"/>
    </location>
    <ligand>
        <name>heme b</name>
        <dbReference type="ChEBI" id="CHEBI:60344"/>
        <label>b562</label>
    </ligand>
    <ligandPart>
        <name>Fe</name>
        <dbReference type="ChEBI" id="CHEBI:18248"/>
    </ligandPart>
</feature>
<feature type="binding site" description="axial binding residue" evidence="2">
    <location>
        <position position="196"/>
    </location>
    <ligand>
        <name>heme b</name>
        <dbReference type="ChEBI" id="CHEBI:60344"/>
        <label>b566</label>
    </ligand>
    <ligandPart>
        <name>Fe</name>
        <dbReference type="ChEBI" id="CHEBI:18248"/>
    </ligandPart>
</feature>
<feature type="binding site" evidence="2">
    <location>
        <position position="201"/>
    </location>
    <ligand>
        <name>a ubiquinone</name>
        <dbReference type="ChEBI" id="CHEBI:16389"/>
    </ligand>
</feature>
<feature type="sequence variant" description="In strain: Isolate TM-2.">
    <original>V</original>
    <variation>I</variation>
    <location>
        <position position="117"/>
    </location>
</feature>
<feature type="sequence variant" description="In strain: Isolate TM-2.">
    <original>FA</original>
    <variation>LT</variation>
    <location>
        <begin position="121"/>
        <end position="122"/>
    </location>
</feature>
<feature type="sequence variant" description="In strain: Isolate TM-2 and Isolate TM-3.">
    <original>I</original>
    <variation>T</variation>
    <location>
        <position position="257"/>
    </location>
</feature>
<feature type="sequence variant" description="In strain: Isolate TM-2 and Isolate TM-3.">
    <original>N</original>
    <variation>S</variation>
    <location>
        <position position="263"/>
    </location>
</feature>
<sequence length="379" mass="42625">MTNIRKTHPLMKIVNSTFIDLPAPSNISSWWNFGSLLGICLILQILTGLFLAMHYTSDTMTAFSSVTHICRDVNYGWLIRYMHANGASMFFICLFLHVGRGLYYGSYMFMETWNIGVLLLFAVMATAFMGYVLPWGQMSFWGATVITNLLSAIPYIGTDLVEWIWGGFSVDKATLTRFFAFHFILPFIVAALAGVHLLFLHETGSNNPSGLSSDSDKIPFHPYYTIKDILGALILILALSSLVLFSPDLLGDPDNYIPANPLNTPPHIKPEWYFLFAYAILRSIPNKLGGVLALVFSILVLMLMPLLHTSKQRSMMFRPISQCLFWLLVADLLTLTWIGGQPVEYPFVIIGQLASILYFTLILILMPIASLVENNLLKW</sequence>
<evidence type="ECO:0000250" key="1"/>
<evidence type="ECO:0000250" key="2">
    <source>
        <dbReference type="UniProtKB" id="P00157"/>
    </source>
</evidence>
<evidence type="ECO:0000255" key="3">
    <source>
        <dbReference type="PROSITE-ProRule" id="PRU00967"/>
    </source>
</evidence>
<evidence type="ECO:0000255" key="4">
    <source>
        <dbReference type="PROSITE-ProRule" id="PRU00968"/>
    </source>
</evidence>